<accession>B0VDH9</accession>
<dbReference type="EC" id="2.7.7.6" evidence="1"/>
<dbReference type="EMBL" id="CU459141">
    <property type="protein sequence ID" value="CAM88276.1"/>
    <property type="molecule type" value="Genomic_DNA"/>
</dbReference>
<dbReference type="RefSeq" id="WP_000653927.1">
    <property type="nucleotide sequence ID" value="NZ_JBDGFB010000003.1"/>
</dbReference>
<dbReference type="SMR" id="B0VDH9"/>
<dbReference type="EnsemblBacteria" id="CAM88276">
    <property type="protein sequence ID" value="CAM88276"/>
    <property type="gene ID" value="ABAYE3488"/>
</dbReference>
<dbReference type="GeneID" id="92892285"/>
<dbReference type="KEGG" id="aby:ABAYE3488"/>
<dbReference type="HOGENOM" id="CLU_000524_3_1_6"/>
<dbReference type="GO" id="GO:0000428">
    <property type="term" value="C:DNA-directed RNA polymerase complex"/>
    <property type="evidence" value="ECO:0007669"/>
    <property type="project" value="UniProtKB-KW"/>
</dbReference>
<dbReference type="GO" id="GO:0003677">
    <property type="term" value="F:DNA binding"/>
    <property type="evidence" value="ECO:0007669"/>
    <property type="project" value="UniProtKB-UniRule"/>
</dbReference>
<dbReference type="GO" id="GO:0003899">
    <property type="term" value="F:DNA-directed RNA polymerase activity"/>
    <property type="evidence" value="ECO:0007669"/>
    <property type="project" value="UniProtKB-UniRule"/>
</dbReference>
<dbReference type="GO" id="GO:0000287">
    <property type="term" value="F:magnesium ion binding"/>
    <property type="evidence" value="ECO:0007669"/>
    <property type="project" value="UniProtKB-UniRule"/>
</dbReference>
<dbReference type="GO" id="GO:0008270">
    <property type="term" value="F:zinc ion binding"/>
    <property type="evidence" value="ECO:0007669"/>
    <property type="project" value="UniProtKB-UniRule"/>
</dbReference>
<dbReference type="GO" id="GO:0006351">
    <property type="term" value="P:DNA-templated transcription"/>
    <property type="evidence" value="ECO:0007669"/>
    <property type="project" value="UniProtKB-UniRule"/>
</dbReference>
<dbReference type="CDD" id="cd02655">
    <property type="entry name" value="RNAP_beta'_C"/>
    <property type="match status" value="1"/>
</dbReference>
<dbReference type="CDD" id="cd01609">
    <property type="entry name" value="RNAP_beta'_N"/>
    <property type="match status" value="1"/>
</dbReference>
<dbReference type="FunFam" id="1.10.132.30:FF:000003">
    <property type="entry name" value="DNA-directed RNA polymerase subunit beta"/>
    <property type="match status" value="1"/>
</dbReference>
<dbReference type="FunFam" id="1.10.150.390:FF:000002">
    <property type="entry name" value="DNA-directed RNA polymerase subunit beta"/>
    <property type="match status" value="1"/>
</dbReference>
<dbReference type="FunFam" id="4.10.860.120:FF:000001">
    <property type="entry name" value="DNA-directed RNA polymerase subunit beta"/>
    <property type="match status" value="1"/>
</dbReference>
<dbReference type="Gene3D" id="1.10.132.30">
    <property type="match status" value="1"/>
</dbReference>
<dbReference type="Gene3D" id="1.10.150.390">
    <property type="match status" value="1"/>
</dbReference>
<dbReference type="Gene3D" id="1.10.1790.20">
    <property type="match status" value="1"/>
</dbReference>
<dbReference type="Gene3D" id="1.10.40.90">
    <property type="match status" value="1"/>
</dbReference>
<dbReference type="Gene3D" id="2.40.40.20">
    <property type="match status" value="1"/>
</dbReference>
<dbReference type="Gene3D" id="2.40.50.100">
    <property type="match status" value="3"/>
</dbReference>
<dbReference type="Gene3D" id="4.10.860.120">
    <property type="entry name" value="RNA polymerase II, clamp domain"/>
    <property type="match status" value="1"/>
</dbReference>
<dbReference type="Gene3D" id="1.10.274.100">
    <property type="entry name" value="RNA polymerase Rpb1, domain 3"/>
    <property type="match status" value="1"/>
</dbReference>
<dbReference type="HAMAP" id="MF_01322">
    <property type="entry name" value="RNApol_bact_RpoC"/>
    <property type="match status" value="1"/>
</dbReference>
<dbReference type="InterPro" id="IPR045867">
    <property type="entry name" value="DNA-dir_RpoC_beta_prime"/>
</dbReference>
<dbReference type="InterPro" id="IPR012754">
    <property type="entry name" value="DNA-dir_RpoC_beta_prime_bact"/>
</dbReference>
<dbReference type="InterPro" id="IPR000722">
    <property type="entry name" value="RNA_pol_asu"/>
</dbReference>
<dbReference type="InterPro" id="IPR006592">
    <property type="entry name" value="RNA_pol_N"/>
</dbReference>
<dbReference type="InterPro" id="IPR007080">
    <property type="entry name" value="RNA_pol_Rpb1_1"/>
</dbReference>
<dbReference type="InterPro" id="IPR007066">
    <property type="entry name" value="RNA_pol_Rpb1_3"/>
</dbReference>
<dbReference type="InterPro" id="IPR042102">
    <property type="entry name" value="RNA_pol_Rpb1_3_sf"/>
</dbReference>
<dbReference type="InterPro" id="IPR007083">
    <property type="entry name" value="RNA_pol_Rpb1_4"/>
</dbReference>
<dbReference type="InterPro" id="IPR007081">
    <property type="entry name" value="RNA_pol_Rpb1_5"/>
</dbReference>
<dbReference type="InterPro" id="IPR044893">
    <property type="entry name" value="RNA_pol_Rpb1_clamp_domain"/>
</dbReference>
<dbReference type="InterPro" id="IPR038120">
    <property type="entry name" value="Rpb1_funnel_sf"/>
</dbReference>
<dbReference type="NCBIfam" id="TIGR02386">
    <property type="entry name" value="rpoC_TIGR"/>
    <property type="match status" value="1"/>
</dbReference>
<dbReference type="PANTHER" id="PTHR19376">
    <property type="entry name" value="DNA-DIRECTED RNA POLYMERASE"/>
    <property type="match status" value="1"/>
</dbReference>
<dbReference type="PANTHER" id="PTHR19376:SF54">
    <property type="entry name" value="DNA-DIRECTED RNA POLYMERASE SUBUNIT BETA"/>
    <property type="match status" value="1"/>
</dbReference>
<dbReference type="Pfam" id="PF04997">
    <property type="entry name" value="RNA_pol_Rpb1_1"/>
    <property type="match status" value="1"/>
</dbReference>
<dbReference type="Pfam" id="PF00623">
    <property type="entry name" value="RNA_pol_Rpb1_2"/>
    <property type="match status" value="2"/>
</dbReference>
<dbReference type="Pfam" id="PF04983">
    <property type="entry name" value="RNA_pol_Rpb1_3"/>
    <property type="match status" value="1"/>
</dbReference>
<dbReference type="Pfam" id="PF05000">
    <property type="entry name" value="RNA_pol_Rpb1_4"/>
    <property type="match status" value="1"/>
</dbReference>
<dbReference type="Pfam" id="PF04998">
    <property type="entry name" value="RNA_pol_Rpb1_5"/>
    <property type="match status" value="1"/>
</dbReference>
<dbReference type="SMART" id="SM00663">
    <property type="entry name" value="RPOLA_N"/>
    <property type="match status" value="1"/>
</dbReference>
<dbReference type="SUPFAM" id="SSF64484">
    <property type="entry name" value="beta and beta-prime subunits of DNA dependent RNA-polymerase"/>
    <property type="match status" value="1"/>
</dbReference>
<reference key="1">
    <citation type="journal article" date="2008" name="PLoS ONE">
        <title>Comparative analysis of Acinetobacters: three genomes for three lifestyles.</title>
        <authorList>
            <person name="Vallenet D."/>
            <person name="Nordmann P."/>
            <person name="Barbe V."/>
            <person name="Poirel L."/>
            <person name="Mangenot S."/>
            <person name="Bataille E."/>
            <person name="Dossat C."/>
            <person name="Gas S."/>
            <person name="Kreimeyer A."/>
            <person name="Lenoble P."/>
            <person name="Oztas S."/>
            <person name="Poulain J."/>
            <person name="Segurens B."/>
            <person name="Robert C."/>
            <person name="Abergel C."/>
            <person name="Claverie J.-M."/>
            <person name="Raoult D."/>
            <person name="Medigue C."/>
            <person name="Weissenbach J."/>
            <person name="Cruveiller S."/>
        </authorList>
    </citation>
    <scope>NUCLEOTIDE SEQUENCE [LARGE SCALE GENOMIC DNA]</scope>
    <source>
        <strain>AYE</strain>
    </source>
</reference>
<proteinExistence type="inferred from homology"/>
<comment type="function">
    <text evidence="1">DNA-dependent RNA polymerase catalyzes the transcription of DNA into RNA using the four ribonucleoside triphosphates as substrates.</text>
</comment>
<comment type="catalytic activity">
    <reaction evidence="1">
        <text>RNA(n) + a ribonucleoside 5'-triphosphate = RNA(n+1) + diphosphate</text>
        <dbReference type="Rhea" id="RHEA:21248"/>
        <dbReference type="Rhea" id="RHEA-COMP:14527"/>
        <dbReference type="Rhea" id="RHEA-COMP:17342"/>
        <dbReference type="ChEBI" id="CHEBI:33019"/>
        <dbReference type="ChEBI" id="CHEBI:61557"/>
        <dbReference type="ChEBI" id="CHEBI:140395"/>
        <dbReference type="EC" id="2.7.7.6"/>
    </reaction>
</comment>
<comment type="cofactor">
    <cofactor evidence="1">
        <name>Mg(2+)</name>
        <dbReference type="ChEBI" id="CHEBI:18420"/>
    </cofactor>
    <text evidence="1">Binds 1 Mg(2+) ion per subunit.</text>
</comment>
<comment type="cofactor">
    <cofactor evidence="1">
        <name>Zn(2+)</name>
        <dbReference type="ChEBI" id="CHEBI:29105"/>
    </cofactor>
    <text evidence="1">Binds 2 Zn(2+) ions per subunit.</text>
</comment>
<comment type="subunit">
    <text evidence="1">The RNAP catalytic core consists of 2 alpha, 1 beta, 1 beta' and 1 omega subunit. When a sigma factor is associated with the core the holoenzyme is formed, which can initiate transcription.</text>
</comment>
<comment type="similarity">
    <text evidence="1">Belongs to the RNA polymerase beta' chain family.</text>
</comment>
<gene>
    <name evidence="1" type="primary">rpoC</name>
    <name type="ordered locus">ABAYE3488</name>
</gene>
<protein>
    <recommendedName>
        <fullName evidence="1">DNA-directed RNA polymerase subunit beta'</fullName>
        <shortName evidence="1">RNAP subunit beta'</shortName>
        <ecNumber evidence="1">2.7.7.6</ecNumber>
    </recommendedName>
    <alternativeName>
        <fullName evidence="1">RNA polymerase subunit beta'</fullName>
    </alternativeName>
    <alternativeName>
        <fullName evidence="1">Transcriptase subunit beta'</fullName>
    </alternativeName>
</protein>
<sequence length="1397" mass="155051">MKDLLDIMRKKTDSDGHAPVEFDRIRIGLASPEMIKSWSHGEVKKPETINYRTFKPERDGLFCAKIFGPVKDYECLCGKYKRMKYKGVICEKCGVEVTTAKVRRERMGHIELASPVAHIWFLKSLPSRIGLLLDMTLRDIERVLYFESYVVTDPGMTPFEKYQLLNDEEYFTALEEHGDEFVAKMGAEAVQDLLKDIDLEAEISRLREEIPQTTSETKLKKASKRLKLMEAFKDSNNKPEWMVMNVLPVLPPDLRPLVPLEGGRFATSDLNDLYRRVINRNNRLKRLLDLAAPDIIVRNEKRMLQESVDALLDNGRRGRAITGSNKRPLKSLADMIKGKQGRFRQNLLGKRVDYSGRSVITVGPTLRLHQCGLPKKMALELFKPFIFAKLQASGQATTIKAAKKMVERETPEVWDVLASVIRQHPVMLNRAPTLHRLGLQAFEPILIEGKAIRLHPLVCAAFNADFDGDQMAVHVPLTLEAQLEARALMMSTNNILSPANGEPIIVPSQDVVLGLYYITRDAVNAKGEGMVFADTHEVNRALATGQVAIHARVKVRVHQTVINENGEREQQTIIVDTTPGRCLLWEVVPEGLSFDMINLEMTKKNISKLINSCYRKLGLKDTVIFADQLMYLGFRQATRSGVSVGMEDMLIPPTKHTIIDKAETEVREIEQQFEQGFVTAGERYNKVVDIWARTNDQVAKAMMDNLSYTLVKNKQGEDEKQKSFNSIYMMSDSGARGSAAQIRQLAGMRGLMAKPDGSIIETPIKANFREGLTVLQYFISTHGARKGLADTALKTANSGYLTRRLVDVAQDLVITEPDCGTSGGLVMTPFIQGGDVIEPLRDRVLGRVTAEDVRRASDDEVVLPRGTLIDEKIAAQLEEAGVDEVKVRSVIACESTFGVCAKCYGRDLARGHLVNPGESVGVMAAQSIGEPGTQLTMRTFHVGGAASRTSAANSVQVRNKGTVRFHNVKTVQHAKGHLVSVSRSGEIGIADELGRERERYKLPYGASILLKDGELVEAGGIVATWDPHTHPLVTEVAGKARFSQIADGVTATSKTDDATGMTTVEILPVTARPASGKDLRPAIVLDTTDGGEQFYFLPQNTIVTVRDGETIGVGDVIGRVPQESSRTRDITGGLPRVADLFEARKPKEHAILAEVSGIVSFGKETKGKNRLVITPDDGSEIYEELIPKWRQINVFEGEHVNRGETISDGPQNPHDILRLKGEVALTNYIVNEVQDVYRLQGVKINDKHIEVIVRQMLRKVDIIDGGDTSFIKGEQVDYIRVVQENQAVLAQNKFPAKFERQLMGITKASLSTDSFISAASFQETTRVLTEAAVTGKEDDLRGLKENVVVGRLIPAGTGLAYHLERRRQEAEAAEHALHNDFSEVDQAFSQALNSEQF</sequence>
<organism>
    <name type="scientific">Acinetobacter baumannii (strain AYE)</name>
    <dbReference type="NCBI Taxonomy" id="509173"/>
    <lineage>
        <taxon>Bacteria</taxon>
        <taxon>Pseudomonadati</taxon>
        <taxon>Pseudomonadota</taxon>
        <taxon>Gammaproteobacteria</taxon>
        <taxon>Moraxellales</taxon>
        <taxon>Moraxellaceae</taxon>
        <taxon>Acinetobacter</taxon>
        <taxon>Acinetobacter calcoaceticus/baumannii complex</taxon>
    </lineage>
</organism>
<name>RPOC_ACIBY</name>
<feature type="chain" id="PRO_0000353274" description="DNA-directed RNA polymerase subunit beta'">
    <location>
        <begin position="1"/>
        <end position="1397"/>
    </location>
</feature>
<feature type="binding site" evidence="1">
    <location>
        <position position="75"/>
    </location>
    <ligand>
        <name>Zn(2+)</name>
        <dbReference type="ChEBI" id="CHEBI:29105"/>
        <label>1</label>
    </ligand>
</feature>
<feature type="binding site" evidence="1">
    <location>
        <position position="77"/>
    </location>
    <ligand>
        <name>Zn(2+)</name>
        <dbReference type="ChEBI" id="CHEBI:29105"/>
        <label>1</label>
    </ligand>
</feature>
<feature type="binding site" evidence="1">
    <location>
        <position position="90"/>
    </location>
    <ligand>
        <name>Zn(2+)</name>
        <dbReference type="ChEBI" id="CHEBI:29105"/>
        <label>1</label>
    </ligand>
</feature>
<feature type="binding site" evidence="1">
    <location>
        <position position="93"/>
    </location>
    <ligand>
        <name>Zn(2+)</name>
        <dbReference type="ChEBI" id="CHEBI:29105"/>
        <label>1</label>
    </ligand>
</feature>
<feature type="binding site" evidence="1">
    <location>
        <position position="465"/>
    </location>
    <ligand>
        <name>Mg(2+)</name>
        <dbReference type="ChEBI" id="CHEBI:18420"/>
    </ligand>
</feature>
<feature type="binding site" evidence="1">
    <location>
        <position position="467"/>
    </location>
    <ligand>
        <name>Mg(2+)</name>
        <dbReference type="ChEBI" id="CHEBI:18420"/>
    </ligand>
</feature>
<feature type="binding site" evidence="1">
    <location>
        <position position="469"/>
    </location>
    <ligand>
        <name>Mg(2+)</name>
        <dbReference type="ChEBI" id="CHEBI:18420"/>
    </ligand>
</feature>
<feature type="binding site" evidence="1">
    <location>
        <position position="819"/>
    </location>
    <ligand>
        <name>Zn(2+)</name>
        <dbReference type="ChEBI" id="CHEBI:29105"/>
        <label>2</label>
    </ligand>
</feature>
<feature type="binding site" evidence="1">
    <location>
        <position position="893"/>
    </location>
    <ligand>
        <name>Zn(2+)</name>
        <dbReference type="ChEBI" id="CHEBI:29105"/>
        <label>2</label>
    </ligand>
</feature>
<feature type="binding site" evidence="1">
    <location>
        <position position="900"/>
    </location>
    <ligand>
        <name>Zn(2+)</name>
        <dbReference type="ChEBI" id="CHEBI:29105"/>
        <label>2</label>
    </ligand>
</feature>
<feature type="binding site" evidence="1">
    <location>
        <position position="903"/>
    </location>
    <ligand>
        <name>Zn(2+)</name>
        <dbReference type="ChEBI" id="CHEBI:29105"/>
        <label>2</label>
    </ligand>
</feature>
<keyword id="KW-0240">DNA-directed RNA polymerase</keyword>
<keyword id="KW-0460">Magnesium</keyword>
<keyword id="KW-0479">Metal-binding</keyword>
<keyword id="KW-0548">Nucleotidyltransferase</keyword>
<keyword id="KW-0804">Transcription</keyword>
<keyword id="KW-0808">Transferase</keyword>
<keyword id="KW-0862">Zinc</keyword>
<evidence type="ECO:0000255" key="1">
    <source>
        <dbReference type="HAMAP-Rule" id="MF_01322"/>
    </source>
</evidence>